<reference key="1">
    <citation type="journal article" date="2002" name="Nature">
        <title>Sequence of Plasmodium falciparum chromosomes 1, 3-9 and 13.</title>
        <authorList>
            <person name="Hall N."/>
            <person name="Pain A."/>
            <person name="Berriman M."/>
            <person name="Churcher C.M."/>
            <person name="Harris B."/>
            <person name="Harris D."/>
            <person name="Mungall K.L."/>
            <person name="Bowman S."/>
            <person name="Atkin R."/>
            <person name="Baker S."/>
            <person name="Barron A."/>
            <person name="Brooks K."/>
            <person name="Buckee C.O."/>
            <person name="Burrows C."/>
            <person name="Cherevach I."/>
            <person name="Chillingworth C."/>
            <person name="Chillingworth T."/>
            <person name="Christodoulou Z."/>
            <person name="Clark L."/>
            <person name="Clark R."/>
            <person name="Corton C."/>
            <person name="Cronin A."/>
            <person name="Davies R.M."/>
            <person name="Davis P."/>
            <person name="Dear P."/>
            <person name="Dearden F."/>
            <person name="Doggett J."/>
            <person name="Feltwell T."/>
            <person name="Goble A."/>
            <person name="Goodhead I."/>
            <person name="Gwilliam R."/>
            <person name="Hamlin N."/>
            <person name="Hance Z."/>
            <person name="Harper D."/>
            <person name="Hauser H."/>
            <person name="Hornsby T."/>
            <person name="Holroyd S."/>
            <person name="Horrocks P."/>
            <person name="Humphray S."/>
            <person name="Jagels K."/>
            <person name="James K.D."/>
            <person name="Johnson D."/>
            <person name="Kerhornou A."/>
            <person name="Knights A."/>
            <person name="Konfortov B."/>
            <person name="Kyes S."/>
            <person name="Larke N."/>
            <person name="Lawson D."/>
            <person name="Lennard N."/>
            <person name="Line A."/>
            <person name="Maddison M."/>
            <person name="Mclean J."/>
            <person name="Mooney P."/>
            <person name="Moule S."/>
            <person name="Murphy L."/>
            <person name="Oliver K."/>
            <person name="Ormond D."/>
            <person name="Price C."/>
            <person name="Quail M.A."/>
            <person name="Rabbinowitsch E."/>
            <person name="Rajandream M.A."/>
            <person name="Rutter S."/>
            <person name="Rutherford K.M."/>
            <person name="Sanders M."/>
            <person name="Simmonds M."/>
            <person name="Seeger K."/>
            <person name="Sharp S."/>
            <person name="Smith R."/>
            <person name="Squares R."/>
            <person name="Squares S."/>
            <person name="Stevens K."/>
            <person name="Taylor K."/>
            <person name="Tivey A."/>
            <person name="Unwin L."/>
            <person name="Whitehead S."/>
            <person name="Woodward J.R."/>
            <person name="Sulston J.E."/>
            <person name="Craig A."/>
            <person name="Newbold C."/>
            <person name="Barrell B.G."/>
        </authorList>
    </citation>
    <scope>NUCLEOTIDE SEQUENCE [LARGE SCALE GENOMIC DNA]</scope>
    <source>
        <strain>3D7</strain>
    </source>
</reference>
<reference key="2">
    <citation type="journal article" date="2002" name="Nature">
        <title>Genome sequence of the human malaria parasite Plasmodium falciparum.</title>
        <authorList>
            <person name="Gardner M.J."/>
            <person name="Hall N."/>
            <person name="Fung E."/>
            <person name="White O."/>
            <person name="Berriman M."/>
            <person name="Hyman R.W."/>
            <person name="Carlton J.M."/>
            <person name="Pain A."/>
            <person name="Nelson K.E."/>
            <person name="Bowman S."/>
            <person name="Paulsen I.T."/>
            <person name="James K.D."/>
            <person name="Eisen J.A."/>
            <person name="Rutherford K.M."/>
            <person name="Salzberg S.L."/>
            <person name="Craig A."/>
            <person name="Kyes S."/>
            <person name="Chan M.-S."/>
            <person name="Nene V."/>
            <person name="Shallom S.J."/>
            <person name="Suh B."/>
            <person name="Peterson J."/>
            <person name="Angiuoli S."/>
            <person name="Pertea M."/>
            <person name="Allen J."/>
            <person name="Selengut J."/>
            <person name="Haft D."/>
            <person name="Mather M.W."/>
            <person name="Vaidya A.B."/>
            <person name="Martin D.M.A."/>
            <person name="Fairlamb A.H."/>
            <person name="Fraunholz M.J."/>
            <person name="Roos D.S."/>
            <person name="Ralph S.A."/>
            <person name="McFadden G.I."/>
            <person name="Cummings L.M."/>
            <person name="Subramanian G.M."/>
            <person name="Mungall C."/>
            <person name="Venter J.C."/>
            <person name="Carucci D.J."/>
            <person name="Hoffman S.L."/>
            <person name="Newbold C."/>
            <person name="Davis R.W."/>
            <person name="Fraser C.M."/>
            <person name="Barrell B.G."/>
        </authorList>
    </citation>
    <scope>NUCLEOTIDE SEQUENCE [LARGE SCALE GENOMIC DNA]</scope>
    <source>
        <strain>3D7</strain>
    </source>
</reference>
<reference key="3">
    <citation type="journal article" date="2004" name="Mol. Microbiol.">
        <title>The human malaria parasite Plasmodium falciparum has distinct organelle-specific lipoylation pathways.</title>
        <authorList>
            <person name="Wrenger C."/>
            <person name="Mueller S."/>
        </authorList>
    </citation>
    <scope>FUNCTION</scope>
    <scope>SUBCELLULAR LOCATION</scope>
    <scope>DEVELOPMENTAL STAGE</scope>
</reference>
<comment type="function">
    <text evidence="1 3">Catalyzes the radical-mediated insertion of two sulfur atoms into the C-6 and C-8 positions of the octanoyl moiety bound to the lipoyl domains of lipoate-dependent enzymes, thereby converting the octanoylated domains into lipoylated derivatives.</text>
</comment>
<comment type="catalytic activity">
    <reaction evidence="1">
        <text>[[Fe-S] cluster scaffold protein carrying a second [4Fe-4S](2+) cluster] + N(6)-octanoyl-L-lysyl-[protein] + 2 oxidized [2Fe-2S]-[ferredoxin] + 2 S-adenosyl-L-methionine + 4 H(+) = [[Fe-S] cluster scaffold protein] + N(6)-[(R)-dihydrolipoyl]-L-lysyl-[protein] + 4 Fe(3+) + 2 hydrogen sulfide + 2 5'-deoxyadenosine + 2 L-methionine + 2 reduced [2Fe-2S]-[ferredoxin]</text>
        <dbReference type="Rhea" id="RHEA:16585"/>
        <dbReference type="Rhea" id="RHEA-COMP:9928"/>
        <dbReference type="Rhea" id="RHEA-COMP:10000"/>
        <dbReference type="Rhea" id="RHEA-COMP:10001"/>
        <dbReference type="Rhea" id="RHEA-COMP:10475"/>
        <dbReference type="Rhea" id="RHEA-COMP:14568"/>
        <dbReference type="Rhea" id="RHEA-COMP:14569"/>
        <dbReference type="ChEBI" id="CHEBI:15378"/>
        <dbReference type="ChEBI" id="CHEBI:17319"/>
        <dbReference type="ChEBI" id="CHEBI:29034"/>
        <dbReference type="ChEBI" id="CHEBI:29919"/>
        <dbReference type="ChEBI" id="CHEBI:33722"/>
        <dbReference type="ChEBI" id="CHEBI:33737"/>
        <dbReference type="ChEBI" id="CHEBI:33738"/>
        <dbReference type="ChEBI" id="CHEBI:57844"/>
        <dbReference type="ChEBI" id="CHEBI:59789"/>
        <dbReference type="ChEBI" id="CHEBI:78809"/>
        <dbReference type="ChEBI" id="CHEBI:83100"/>
        <dbReference type="EC" id="2.8.1.8"/>
    </reaction>
</comment>
<comment type="cofactor">
    <cofactor evidence="1">
        <name>[4Fe-4S] cluster</name>
        <dbReference type="ChEBI" id="CHEBI:49883"/>
    </cofactor>
    <text evidence="1">Binds 2 [4Fe-4S] clusters per subunit. One cluster is coordinated with 3 cysteines and an exchangeable S-adenosyl-L-methionine.</text>
</comment>
<comment type="pathway">
    <text evidence="1">Protein modification; protein lipoylation via endogenous pathway; protein N(6)-(lipoyl)lysine from octanoyl-[acyl-carrier-protein]: step 2/2.</text>
</comment>
<comment type="subcellular location">
    <subcellularLocation>
        <location evidence="1">Plastid</location>
        <location evidence="1">Apicoplast</location>
    </subcellularLocation>
</comment>
<comment type="developmental stage">
    <text evidence="3">Expressed maximally in the early stages and late stages of the parasite erythrocytic development.</text>
</comment>
<comment type="similarity">
    <text evidence="1">Belongs to the radical SAM superfamily. Lipoyl synthase family.</text>
</comment>
<organism>
    <name type="scientific">Plasmodium falciparum (isolate 3D7)</name>
    <dbReference type="NCBI Taxonomy" id="36329"/>
    <lineage>
        <taxon>Eukaryota</taxon>
        <taxon>Sar</taxon>
        <taxon>Alveolata</taxon>
        <taxon>Apicomplexa</taxon>
        <taxon>Aconoidasida</taxon>
        <taxon>Haemosporida</taxon>
        <taxon>Plasmodiidae</taxon>
        <taxon>Plasmodium</taxon>
        <taxon>Plasmodium (Laverania)</taxon>
    </lineage>
</organism>
<protein>
    <recommendedName>
        <fullName evidence="1">Lipoyl synthase, apicoplast</fullName>
        <ecNumber evidence="1">2.8.1.8</ecNumber>
    </recommendedName>
    <alternativeName>
        <fullName evidence="1">Lipoate synthase</fullName>
        <shortName evidence="1">LS</shortName>
        <shortName evidence="1">Lip-syn</shortName>
    </alternativeName>
    <alternativeName>
        <fullName evidence="1">Lipoic acid synthase</fullName>
    </alternativeName>
</protein>
<proteinExistence type="evidence at transcript level"/>
<gene>
    <name evidence="1" type="primary">lipA</name>
    <name type="ORF">MAL13P1.220</name>
</gene>
<evidence type="ECO:0000255" key="1">
    <source>
        <dbReference type="HAMAP-Rule" id="MF_03123"/>
    </source>
</evidence>
<evidence type="ECO:0000255" key="2">
    <source>
        <dbReference type="PROSITE-ProRule" id="PRU01266"/>
    </source>
</evidence>
<evidence type="ECO:0000269" key="3">
    <source>
    </source>
</evidence>
<feature type="signal peptide" evidence="1">
    <location>
        <begin position="1"/>
        <end position="23"/>
    </location>
</feature>
<feature type="chain" id="PRO_0000398230" description="Lipoyl synthase, apicoplast">
    <location>
        <begin position="24"/>
        <end position="415"/>
    </location>
</feature>
<feature type="domain" description="Radical SAM core" evidence="2">
    <location>
        <begin position="165"/>
        <end position="383"/>
    </location>
</feature>
<feature type="binding site" evidence="1">
    <location>
        <position position="153"/>
    </location>
    <ligand>
        <name>[4Fe-4S] cluster</name>
        <dbReference type="ChEBI" id="CHEBI:49883"/>
        <label>1</label>
    </ligand>
</feature>
<feature type="binding site" evidence="1">
    <location>
        <position position="158"/>
    </location>
    <ligand>
        <name>[4Fe-4S] cluster</name>
        <dbReference type="ChEBI" id="CHEBI:49883"/>
        <label>1</label>
    </ligand>
</feature>
<feature type="binding site" evidence="1">
    <location>
        <position position="164"/>
    </location>
    <ligand>
        <name>[4Fe-4S] cluster</name>
        <dbReference type="ChEBI" id="CHEBI:49883"/>
        <label>1</label>
    </ligand>
</feature>
<feature type="binding site" evidence="1">
    <location>
        <position position="179"/>
    </location>
    <ligand>
        <name>[4Fe-4S] cluster</name>
        <dbReference type="ChEBI" id="CHEBI:49883"/>
        <label>2</label>
        <note>4Fe-4S-S-AdoMet</note>
    </ligand>
</feature>
<feature type="binding site" evidence="1">
    <location>
        <position position="183"/>
    </location>
    <ligand>
        <name>[4Fe-4S] cluster</name>
        <dbReference type="ChEBI" id="CHEBI:49883"/>
        <label>2</label>
        <note>4Fe-4S-S-AdoMet</note>
    </ligand>
</feature>
<feature type="binding site" evidence="1">
    <location>
        <position position="186"/>
    </location>
    <ligand>
        <name>[4Fe-4S] cluster</name>
        <dbReference type="ChEBI" id="CHEBI:49883"/>
        <label>2</label>
        <note>4Fe-4S-S-AdoMet</note>
    </ligand>
</feature>
<feature type="binding site" evidence="1">
    <location>
        <position position="394"/>
    </location>
    <ligand>
        <name>[4Fe-4S] cluster</name>
        <dbReference type="ChEBI" id="CHEBI:49883"/>
        <label>1</label>
    </ligand>
</feature>
<keyword id="KW-0004">4Fe-4S</keyword>
<keyword id="KW-0933">Apicoplast</keyword>
<keyword id="KW-0408">Iron</keyword>
<keyword id="KW-0411">Iron-sulfur</keyword>
<keyword id="KW-0479">Metal-binding</keyword>
<keyword id="KW-0934">Plastid</keyword>
<keyword id="KW-1185">Reference proteome</keyword>
<keyword id="KW-0949">S-adenosyl-L-methionine</keyword>
<keyword id="KW-0732">Signal</keyword>
<keyword id="KW-0808">Transferase</keyword>
<sequence length="415" mass="47593">MHFGIPSLFYLYILFSIIMRIKCVITKNLKKTKKRTCSYIPHGNMEKGIILNYIEKPNPAYLKRGKNKNKNKNKKGDIYKLRNVEILLYANRYVHEGNENFSSTTKKLLLTPKVGNKMPEGKKPDWFHVAAPTVAKYNKLKDDIKKLNLHTVCEEAQCPNIGECWNIGTATIMLLGDTCTRGCKFCSIKTSSNPLPPDINEPFNTAKAICEWNIDYVVLTSVDRDDLPDGGASHFAKTVELVKFSRPDILIECLVSDFQGNIDSVRKLAFSGLDVYAHNIETVKRLQKYVRDKRANYDQSLFVLKTAKEINPQLYTKTSIMLGLGETKEEVIQTMYDARKNNIDVITFGQYLRPTKNHLSIVQYISPQMFEYYKEEGLKMGFKYIASGPLVRSSYKAGEYFIKNLVNQRNKDKKN</sequence>
<name>LIPA_PLAF7</name>
<dbReference type="EC" id="2.8.1.8" evidence="1"/>
<dbReference type="EMBL" id="AL844509">
    <property type="protein sequence ID" value="CAD52569.1"/>
    <property type="molecule type" value="Genomic_DNA"/>
</dbReference>
<dbReference type="RefSeq" id="XP_001350160.1">
    <property type="nucleotide sequence ID" value="XM_001350124.1"/>
</dbReference>
<dbReference type="SMR" id="Q8IDQ0"/>
<dbReference type="FunCoup" id="Q8IDQ0">
    <property type="interactions" value="305"/>
</dbReference>
<dbReference type="STRING" id="36329.Q8IDQ0"/>
<dbReference type="PaxDb" id="5833-MAL13P1.220"/>
<dbReference type="EnsemblProtists" id="CAD52569">
    <property type="protein sequence ID" value="CAD52569"/>
    <property type="gene ID" value="PF3D7_1344600"/>
</dbReference>
<dbReference type="KEGG" id="pfa:PF3D7_1344600"/>
<dbReference type="VEuPathDB" id="PlasmoDB:PF3D7_1344600"/>
<dbReference type="HOGENOM" id="CLU_033144_2_2_1"/>
<dbReference type="InParanoid" id="Q8IDQ0"/>
<dbReference type="OMA" id="RSCAFCQ"/>
<dbReference type="OrthoDB" id="3231at2759"/>
<dbReference type="PhylomeDB" id="Q8IDQ0"/>
<dbReference type="UniPathway" id="UPA00538">
    <property type="reaction ID" value="UER00593"/>
</dbReference>
<dbReference type="Proteomes" id="UP000001450">
    <property type="component" value="Chromosome 13"/>
</dbReference>
<dbReference type="GO" id="GO:0020011">
    <property type="term" value="C:apicoplast"/>
    <property type="evidence" value="ECO:0000314"/>
    <property type="project" value="GeneDB"/>
</dbReference>
<dbReference type="GO" id="GO:0005739">
    <property type="term" value="C:mitochondrion"/>
    <property type="evidence" value="ECO:0000318"/>
    <property type="project" value="GO_Central"/>
</dbReference>
<dbReference type="GO" id="GO:0051539">
    <property type="term" value="F:4 iron, 4 sulfur cluster binding"/>
    <property type="evidence" value="ECO:0007669"/>
    <property type="project" value="UniProtKB-UniRule"/>
</dbReference>
<dbReference type="GO" id="GO:0016992">
    <property type="term" value="F:lipoate synthase activity"/>
    <property type="evidence" value="ECO:0000318"/>
    <property type="project" value="GO_Central"/>
</dbReference>
<dbReference type="GO" id="GO:0046872">
    <property type="term" value="F:metal ion binding"/>
    <property type="evidence" value="ECO:0007669"/>
    <property type="project" value="UniProtKB-KW"/>
</dbReference>
<dbReference type="GO" id="GO:0009107">
    <property type="term" value="P:lipoate biosynthetic process"/>
    <property type="evidence" value="ECO:0000318"/>
    <property type="project" value="GO_Central"/>
</dbReference>
<dbReference type="CDD" id="cd01335">
    <property type="entry name" value="Radical_SAM"/>
    <property type="match status" value="1"/>
</dbReference>
<dbReference type="FunFam" id="3.20.20.70:FF:000249">
    <property type="entry name" value="Lipoyl synthase, apicoplast"/>
    <property type="match status" value="1"/>
</dbReference>
<dbReference type="Gene3D" id="3.20.20.70">
    <property type="entry name" value="Aldolase class I"/>
    <property type="match status" value="1"/>
</dbReference>
<dbReference type="HAMAP" id="MF_00206">
    <property type="entry name" value="Lipoyl_synth"/>
    <property type="match status" value="1"/>
</dbReference>
<dbReference type="InterPro" id="IPR013785">
    <property type="entry name" value="Aldolase_TIM"/>
</dbReference>
<dbReference type="InterPro" id="IPR006638">
    <property type="entry name" value="Elp3/MiaA/NifB-like_rSAM"/>
</dbReference>
<dbReference type="InterPro" id="IPR031691">
    <property type="entry name" value="LIAS_N"/>
</dbReference>
<dbReference type="InterPro" id="IPR003698">
    <property type="entry name" value="Lipoyl_synth"/>
</dbReference>
<dbReference type="InterPro" id="IPR007197">
    <property type="entry name" value="rSAM"/>
</dbReference>
<dbReference type="NCBIfam" id="TIGR00510">
    <property type="entry name" value="lipA"/>
    <property type="match status" value="1"/>
</dbReference>
<dbReference type="NCBIfam" id="NF004019">
    <property type="entry name" value="PRK05481.1"/>
    <property type="match status" value="1"/>
</dbReference>
<dbReference type="NCBIfam" id="NF009544">
    <property type="entry name" value="PRK12928.1"/>
    <property type="match status" value="1"/>
</dbReference>
<dbReference type="PANTHER" id="PTHR10949">
    <property type="entry name" value="LIPOYL SYNTHASE"/>
    <property type="match status" value="1"/>
</dbReference>
<dbReference type="PANTHER" id="PTHR10949:SF0">
    <property type="entry name" value="LIPOYL SYNTHASE, MITOCHONDRIAL"/>
    <property type="match status" value="1"/>
</dbReference>
<dbReference type="Pfam" id="PF16881">
    <property type="entry name" value="LIAS_N"/>
    <property type="match status" value="1"/>
</dbReference>
<dbReference type="Pfam" id="PF04055">
    <property type="entry name" value="Radical_SAM"/>
    <property type="match status" value="1"/>
</dbReference>
<dbReference type="SFLD" id="SFLDF00271">
    <property type="entry name" value="lipoyl_synthase"/>
    <property type="match status" value="1"/>
</dbReference>
<dbReference type="SFLD" id="SFLDG01058">
    <property type="entry name" value="lipoyl_synthase_like"/>
    <property type="match status" value="1"/>
</dbReference>
<dbReference type="SMART" id="SM00729">
    <property type="entry name" value="Elp3"/>
    <property type="match status" value="1"/>
</dbReference>
<dbReference type="SUPFAM" id="SSF102114">
    <property type="entry name" value="Radical SAM enzymes"/>
    <property type="match status" value="1"/>
</dbReference>
<dbReference type="PROSITE" id="PS51918">
    <property type="entry name" value="RADICAL_SAM"/>
    <property type="match status" value="1"/>
</dbReference>
<accession>Q8IDQ0</accession>